<reference key="1">
    <citation type="journal article" date="2018" name="Theranostics">
        <title>Histidine-rich modification of a scorpion-derived peptide improves bioavailability and inhibitory activity against HSV-1.</title>
        <authorList>
            <person name="Zeng Z."/>
            <person name="Zhang R."/>
            <person name="Hong W."/>
            <person name="Cheng Y."/>
            <person name="Wang H."/>
            <person name="Lang Y."/>
            <person name="Ji Z."/>
            <person name="Wu Y."/>
            <person name="Li W."/>
            <person name="Xie Y."/>
            <person name="Cao Z."/>
        </authorList>
    </citation>
    <scope>NUCLEOTIDE SEQUENCE [MRNA]</scope>
    <scope>SYNTHESIS OF 24-36</scope>
    <scope>PROBABLE AMIDATION AT ILE-36</scope>
    <scope>CIRCULAR DICHROISM ANALYSIS</scope>
    <scope>MUTAGENESIS OF 26-GLY-GLU-27; ASN-30 AND 33-LYS-GLY-34</scope>
    <source>
        <tissue>Venom gland</tissue>
    </source>
</reference>
<evidence type="ECO:0000255" key="1"/>
<evidence type="ECO:0000269" key="2">
    <source>
    </source>
</evidence>
<evidence type="ECO:0000303" key="3">
    <source>
    </source>
</evidence>
<evidence type="ECO:0000305" key="4"/>
<evidence type="ECO:0000305" key="5">
    <source>
    </source>
</evidence>
<proteinExistence type="evidence at protein level"/>
<name>NDBP8_EUSVA</name>
<comment type="function">
    <text evidence="2">Probable antimicrobial peptide. Shows dose-dependent and time-dependent inactivation of herpes simplex virus type 1 (HSV-1) and dose-dependent inhibition of HSV-1 viral attachment to host cells. Scarcely suppress an established HSV-1 infection due to poor cellular uptake.</text>
</comment>
<comment type="subcellular location">
    <subcellularLocation>
        <location evidence="5">Secreted</location>
    </subcellularLocation>
</comment>
<comment type="tissue specificity">
    <text evidence="5">Expressed by the venom gland.</text>
</comment>
<comment type="domain">
    <text evidence="2">Amphipathic peptide with an alpha-helix structure.</text>
</comment>
<comment type="similarity">
    <text evidence="4">Belongs to the non-disulfide-bridged peptide (NDBP) superfamily. Short antimicrobial peptide (group 4) family.</text>
</comment>
<accession>P0DY01</accession>
<keyword id="KW-0027">Amidation</keyword>
<keyword id="KW-0929">Antimicrobial</keyword>
<keyword id="KW-0165">Cleavage on pair of basic residues</keyword>
<keyword id="KW-0964">Secreted</keyword>
<keyword id="KW-0732">Signal</keyword>
<protein>
    <recommendedName>
        <fullName evidence="3">Antimicrobial peptide Eval418</fullName>
    </recommendedName>
</protein>
<dbReference type="GO" id="GO:0005576">
    <property type="term" value="C:extracellular region"/>
    <property type="evidence" value="ECO:0007669"/>
    <property type="project" value="UniProtKB-SubCell"/>
</dbReference>
<organism>
    <name type="scientific">Euscorpiops validus</name>
    <name type="common">Scorpion</name>
    <dbReference type="NCBI Taxonomy" id="1643527"/>
    <lineage>
        <taxon>Eukaryota</taxon>
        <taxon>Metazoa</taxon>
        <taxon>Ecdysozoa</taxon>
        <taxon>Arthropoda</taxon>
        <taxon>Chelicerata</taxon>
        <taxon>Arachnida</taxon>
        <taxon>Scorpiones</taxon>
        <taxon>Iurida</taxon>
        <taxon>Chactoidea</taxon>
        <taxon>Euscorpiidae</taxon>
        <taxon>Scorpiopinae</taxon>
        <taxon>Scorpiopini</taxon>
        <taxon>Euscorpiops</taxon>
    </lineage>
</organism>
<feature type="signal peptide" evidence="1">
    <location>
        <begin position="1"/>
        <end position="23"/>
    </location>
</feature>
<feature type="peptide" id="PRO_0000461879" description="Antimicrobial peptide Eval418" evidence="5">
    <location>
        <begin position="24"/>
        <end position="36"/>
    </location>
</feature>
<feature type="propeptide" id="PRO_0000461880" evidence="5">
    <location>
        <begin position="37"/>
        <end position="68"/>
    </location>
</feature>
<feature type="modified residue" description="Isoleucine amide" evidence="5">
    <location>
        <position position="36"/>
    </location>
</feature>
<feature type="mutagenesis site" description="In Eval418-FH5; increase in viral inactivation activity, increase in enhanced viral attachment inhibitory activity, and gain in inhibitory activity against intracellular HSV-1, which means an improvement of intracellular uptake and distribution; when associated with H-30 and 33-H-H-34." evidence="2">
    <original>GE</original>
    <variation>HH</variation>
    <location>
        <begin position="26"/>
        <end position="27"/>
    </location>
</feature>
<feature type="mutagenesis site" description="In Eval418-FH5; increase in viral inactivation activity, increase in enhanced viral attachment inhibitory activity, and gain in inhibitory activity against intracellular HSV-1, which means an improvement of intracellular uptake and distribution; when associated with 26-H-H-27 and 33-H-H-34." evidence="2">
    <original>N</original>
    <variation>H</variation>
    <location>
        <position position="30"/>
    </location>
</feature>
<feature type="mutagenesis site" description="In Eval418-FH5; increase in viral inactivation activity, increase in enhanced viral attachment inhibitory activity, and gain in inhibitory activity against intracellular HSV-1, which means an improvement of intracellular uptake and distribution; when associated with 26-H-H-27 and H-30." evidence="2">
    <original>KG</original>
    <variation>HH</variation>
    <location>
        <begin position="33"/>
        <end position="34"/>
    </location>
</feature>
<sequence>MRTQLAVLLVALVLLQMIAQSEALWGEIWNTVKGLIGKRGLRNLDDLDDVFDDDLSAADLEFLKQLMR</sequence>